<reference key="1">
    <citation type="journal article" date="2004" name="Proc. Natl. Acad. Sci. U.S.A.">
        <title>Insights into the evolution of Yersinia pestis through whole-genome comparison with Yersinia pseudotuberculosis.</title>
        <authorList>
            <person name="Chain P.S.G."/>
            <person name="Carniel E."/>
            <person name="Larimer F.W."/>
            <person name="Lamerdin J."/>
            <person name="Stoutland P.O."/>
            <person name="Regala W.M."/>
            <person name="Georgescu A.M."/>
            <person name="Vergez L.M."/>
            <person name="Land M.L."/>
            <person name="Motin V.L."/>
            <person name="Brubaker R.R."/>
            <person name="Fowler J."/>
            <person name="Hinnebusch J."/>
            <person name="Marceau M."/>
            <person name="Medigue C."/>
            <person name="Simonet M."/>
            <person name="Chenal-Francisque V."/>
            <person name="Souza B."/>
            <person name="Dacheux D."/>
            <person name="Elliott J.M."/>
            <person name="Derbise A."/>
            <person name="Hauser L.J."/>
            <person name="Garcia E."/>
        </authorList>
    </citation>
    <scope>NUCLEOTIDE SEQUENCE [LARGE SCALE GENOMIC DNA]</scope>
    <source>
        <strain>IP32953</strain>
    </source>
</reference>
<feature type="chain" id="PRO_0000314411" description="Carboxy-S-adenosyl-L-methionine synthase 2">
    <location>
        <begin position="1"/>
        <end position="267"/>
    </location>
</feature>
<feature type="region of interest" description="Disordered" evidence="2">
    <location>
        <begin position="1"/>
        <end position="25"/>
    </location>
</feature>
<feature type="compositionally biased region" description="Polar residues" evidence="2">
    <location>
        <begin position="1"/>
        <end position="11"/>
    </location>
</feature>
<feature type="compositionally biased region" description="Basic and acidic residues" evidence="2">
    <location>
        <begin position="12"/>
        <end position="24"/>
    </location>
</feature>
<feature type="binding site" evidence="1">
    <location>
        <position position="59"/>
    </location>
    <ligand>
        <name>S-adenosyl-L-methionine</name>
        <dbReference type="ChEBI" id="CHEBI:59789"/>
    </ligand>
</feature>
<feature type="binding site" evidence="1">
    <location>
        <begin position="84"/>
        <end position="86"/>
    </location>
    <ligand>
        <name>S-adenosyl-L-methionine</name>
        <dbReference type="ChEBI" id="CHEBI:59789"/>
    </ligand>
</feature>
<feature type="binding site" evidence="1">
    <location>
        <begin position="109"/>
        <end position="110"/>
    </location>
    <ligand>
        <name>S-adenosyl-L-methionine</name>
        <dbReference type="ChEBI" id="CHEBI:59789"/>
    </ligand>
</feature>
<feature type="binding site" evidence="1">
    <location>
        <begin position="137"/>
        <end position="138"/>
    </location>
    <ligand>
        <name>S-adenosyl-L-methionine</name>
        <dbReference type="ChEBI" id="CHEBI:59789"/>
    </ligand>
</feature>
<feature type="binding site" evidence="1">
    <location>
        <position position="152"/>
    </location>
    <ligand>
        <name>S-adenosyl-L-methionine</name>
        <dbReference type="ChEBI" id="CHEBI:59789"/>
    </ligand>
</feature>
<feature type="binding site" evidence="1">
    <location>
        <position position="219"/>
    </location>
    <ligand>
        <name>S-adenosyl-L-methionine</name>
        <dbReference type="ChEBI" id="CHEBI:59789"/>
    </ligand>
</feature>
<keyword id="KW-0949">S-adenosyl-L-methionine</keyword>
<keyword id="KW-0808">Transferase</keyword>
<dbReference type="EC" id="2.1.3.-" evidence="1"/>
<dbReference type="EMBL" id="BX936398">
    <property type="protein sequence ID" value="CAH21271.1"/>
    <property type="molecule type" value="Genomic_DNA"/>
</dbReference>
<dbReference type="SMR" id="Q66AU7"/>
<dbReference type="KEGG" id="ypo:BZ17_432"/>
<dbReference type="KEGG" id="yps:YPTB2033"/>
<dbReference type="PATRIC" id="fig|273123.14.peg.461"/>
<dbReference type="Proteomes" id="UP000001011">
    <property type="component" value="Chromosome"/>
</dbReference>
<dbReference type="GO" id="GO:0016743">
    <property type="term" value="F:carboxyl- or carbamoyltransferase activity"/>
    <property type="evidence" value="ECO:0007669"/>
    <property type="project" value="UniProtKB-UniRule"/>
</dbReference>
<dbReference type="GO" id="GO:1904047">
    <property type="term" value="F:S-adenosyl-L-methionine binding"/>
    <property type="evidence" value="ECO:0007669"/>
    <property type="project" value="UniProtKB-UniRule"/>
</dbReference>
<dbReference type="GO" id="GO:0002098">
    <property type="term" value="P:tRNA wobble uridine modification"/>
    <property type="evidence" value="ECO:0007669"/>
    <property type="project" value="InterPro"/>
</dbReference>
<dbReference type="CDD" id="cd02440">
    <property type="entry name" value="AdoMet_MTases"/>
    <property type="match status" value="1"/>
</dbReference>
<dbReference type="Gene3D" id="3.40.50.150">
    <property type="entry name" value="Vaccinia Virus protein VP39"/>
    <property type="match status" value="1"/>
</dbReference>
<dbReference type="HAMAP" id="MF_01589">
    <property type="entry name" value="Cx_SAM_synthase"/>
    <property type="match status" value="1"/>
</dbReference>
<dbReference type="InterPro" id="IPR005271">
    <property type="entry name" value="CmoA"/>
</dbReference>
<dbReference type="InterPro" id="IPR041698">
    <property type="entry name" value="Methyltransf_25"/>
</dbReference>
<dbReference type="InterPro" id="IPR029063">
    <property type="entry name" value="SAM-dependent_MTases_sf"/>
</dbReference>
<dbReference type="NCBIfam" id="TIGR00740">
    <property type="entry name" value="carboxy-S-adenosyl-L-methionine synthase CmoA"/>
    <property type="match status" value="1"/>
</dbReference>
<dbReference type="NCBIfam" id="NF011995">
    <property type="entry name" value="PRK15451.1"/>
    <property type="match status" value="1"/>
</dbReference>
<dbReference type="PANTHER" id="PTHR43861:SF2">
    <property type="entry name" value="CARBOXY-S-ADENOSYL-L-METHIONINE SYNTHASE"/>
    <property type="match status" value="1"/>
</dbReference>
<dbReference type="PANTHER" id="PTHR43861">
    <property type="entry name" value="TRANS-ACONITATE 2-METHYLTRANSFERASE-RELATED"/>
    <property type="match status" value="1"/>
</dbReference>
<dbReference type="Pfam" id="PF13649">
    <property type="entry name" value="Methyltransf_25"/>
    <property type="match status" value="1"/>
</dbReference>
<dbReference type="PIRSF" id="PIRSF006325">
    <property type="entry name" value="MeTrfase_bac"/>
    <property type="match status" value="1"/>
</dbReference>
<dbReference type="SUPFAM" id="SSF53335">
    <property type="entry name" value="S-adenosyl-L-methionine-dependent methyltransferases"/>
    <property type="match status" value="1"/>
</dbReference>
<proteinExistence type="inferred from homology"/>
<comment type="function">
    <text evidence="1">Catalyzes the conversion of S-adenosyl-L-methionine (SAM) to carboxy-S-adenosyl-L-methionine (Cx-SAM).</text>
</comment>
<comment type="catalytic activity">
    <reaction evidence="1">
        <text>prephenate + S-adenosyl-L-methionine = carboxy-S-adenosyl-L-methionine + 3-phenylpyruvate + H2O</text>
        <dbReference type="Rhea" id="RHEA:51692"/>
        <dbReference type="ChEBI" id="CHEBI:15377"/>
        <dbReference type="ChEBI" id="CHEBI:18005"/>
        <dbReference type="ChEBI" id="CHEBI:29934"/>
        <dbReference type="ChEBI" id="CHEBI:59789"/>
        <dbReference type="ChEBI" id="CHEBI:134278"/>
    </reaction>
</comment>
<comment type="subunit">
    <text evidence="1">Homodimer.</text>
</comment>
<comment type="similarity">
    <text evidence="1">Belongs to the class I-like SAM-binding methyltransferase superfamily. Cx-SAM synthase family.</text>
</comment>
<accession>Q66AU7</accession>
<name>CMOA2_YERPS</name>
<evidence type="ECO:0000255" key="1">
    <source>
        <dbReference type="HAMAP-Rule" id="MF_01589"/>
    </source>
</evidence>
<evidence type="ECO:0000256" key="2">
    <source>
        <dbReference type="SAM" id="MobiDB-lite"/>
    </source>
</evidence>
<protein>
    <recommendedName>
        <fullName evidence="1">Carboxy-S-adenosyl-L-methionine synthase 2</fullName>
        <shortName evidence="1">Cx-SAM synthase 2</shortName>
        <ecNumber evidence="1">2.1.3.-</ecNumber>
    </recommendedName>
</protein>
<organism>
    <name type="scientific">Yersinia pseudotuberculosis serotype I (strain IP32953)</name>
    <dbReference type="NCBI Taxonomy" id="273123"/>
    <lineage>
        <taxon>Bacteria</taxon>
        <taxon>Pseudomonadati</taxon>
        <taxon>Pseudomonadota</taxon>
        <taxon>Gammaproteobacteria</taxon>
        <taxon>Enterobacterales</taxon>
        <taxon>Yersiniaceae</taxon>
        <taxon>Yersinia</taxon>
    </lineage>
</organism>
<sequence>MPNRDTQSQNDTPRHSPEAAEPQRDSLFAAPIAKLGDWTFDEKVAEVFPDMIQRSVPGYSNIISMIGMLAERFVQPNSQIYDLGCSLGAATLSMRRNIKAEGCKIIAVDNSPAMVERCRRHIDAFRAETPVDVVEADILDIKLENASMVVLNFTLQFLEPANRQRLLNQVYQGLRPGGALVLSEKFSFADHNVGELLFNMHHDFKRANGYSELEISQKRSMLENVMLTDSVETHKNRLHQAGFEHAEVWFQCFNFGSLIALKAGEAQ</sequence>
<gene>
    <name evidence="1" type="primary">cmoA2</name>
    <name type="ordered locus">YPTB2033</name>
</gene>